<protein>
    <recommendedName>
        <fullName>Regulator of MON1-CCZ1 complex homolog</fullName>
    </recommendedName>
    <alternativeName>
        <fullName>Mic1 domain-containing protein DDB_G0286707</fullName>
    </alternativeName>
</protein>
<feature type="chain" id="PRO_0000388259" description="Regulator of MON1-CCZ1 complex homolog">
    <location>
        <begin position="1"/>
        <end position="978"/>
    </location>
</feature>
<feature type="domain" description="Mic1">
    <location>
        <begin position="735"/>
        <end position="908"/>
    </location>
</feature>
<feature type="region of interest" description="Disordered" evidence="2">
    <location>
        <begin position="311"/>
        <end position="363"/>
    </location>
</feature>
<feature type="region of interest" description="Disordered" evidence="2">
    <location>
        <begin position="474"/>
        <end position="546"/>
    </location>
</feature>
<feature type="region of interest" description="Disordered" evidence="2">
    <location>
        <begin position="558"/>
        <end position="665"/>
    </location>
</feature>
<feature type="region of interest" description="Disordered" evidence="2">
    <location>
        <begin position="703"/>
        <end position="727"/>
    </location>
</feature>
<feature type="region of interest" description="Disordered" evidence="2">
    <location>
        <begin position="955"/>
        <end position="978"/>
    </location>
</feature>
<feature type="compositionally biased region" description="Low complexity" evidence="2">
    <location>
        <begin position="311"/>
        <end position="351"/>
    </location>
</feature>
<feature type="compositionally biased region" description="Low complexity" evidence="2">
    <location>
        <begin position="479"/>
        <end position="495"/>
    </location>
</feature>
<feature type="compositionally biased region" description="Polar residues" evidence="2">
    <location>
        <begin position="496"/>
        <end position="515"/>
    </location>
</feature>
<feature type="compositionally biased region" description="Low complexity" evidence="2">
    <location>
        <begin position="516"/>
        <end position="539"/>
    </location>
</feature>
<feature type="compositionally biased region" description="Gly residues" evidence="2">
    <location>
        <begin position="582"/>
        <end position="591"/>
    </location>
</feature>
<feature type="compositionally biased region" description="Low complexity" evidence="2">
    <location>
        <begin position="592"/>
        <end position="663"/>
    </location>
</feature>
<feature type="compositionally biased region" description="Low complexity" evidence="2">
    <location>
        <begin position="710"/>
        <end position="727"/>
    </location>
</feature>
<proteinExistence type="inferred from homology"/>
<name>RMC1_DICDI</name>
<reference key="1">
    <citation type="journal article" date="2005" name="Nature">
        <title>The genome of the social amoeba Dictyostelium discoideum.</title>
        <authorList>
            <person name="Eichinger L."/>
            <person name="Pachebat J.A."/>
            <person name="Gloeckner G."/>
            <person name="Rajandream M.A."/>
            <person name="Sucgang R."/>
            <person name="Berriman M."/>
            <person name="Song J."/>
            <person name="Olsen R."/>
            <person name="Szafranski K."/>
            <person name="Xu Q."/>
            <person name="Tunggal B."/>
            <person name="Kummerfeld S."/>
            <person name="Madera M."/>
            <person name="Konfortov B.A."/>
            <person name="Rivero F."/>
            <person name="Bankier A.T."/>
            <person name="Lehmann R."/>
            <person name="Hamlin N."/>
            <person name="Davies R."/>
            <person name="Gaudet P."/>
            <person name="Fey P."/>
            <person name="Pilcher K."/>
            <person name="Chen G."/>
            <person name="Saunders D."/>
            <person name="Sodergren E.J."/>
            <person name="Davis P."/>
            <person name="Kerhornou A."/>
            <person name="Nie X."/>
            <person name="Hall N."/>
            <person name="Anjard C."/>
            <person name="Hemphill L."/>
            <person name="Bason N."/>
            <person name="Farbrother P."/>
            <person name="Desany B."/>
            <person name="Just E."/>
            <person name="Morio T."/>
            <person name="Rost R."/>
            <person name="Churcher C.M."/>
            <person name="Cooper J."/>
            <person name="Haydock S."/>
            <person name="van Driessche N."/>
            <person name="Cronin A."/>
            <person name="Goodhead I."/>
            <person name="Muzny D.M."/>
            <person name="Mourier T."/>
            <person name="Pain A."/>
            <person name="Lu M."/>
            <person name="Harper D."/>
            <person name="Lindsay R."/>
            <person name="Hauser H."/>
            <person name="James K.D."/>
            <person name="Quiles M."/>
            <person name="Madan Babu M."/>
            <person name="Saito T."/>
            <person name="Buchrieser C."/>
            <person name="Wardroper A."/>
            <person name="Felder M."/>
            <person name="Thangavelu M."/>
            <person name="Johnson D."/>
            <person name="Knights A."/>
            <person name="Loulseged H."/>
            <person name="Mungall K.L."/>
            <person name="Oliver K."/>
            <person name="Price C."/>
            <person name="Quail M.A."/>
            <person name="Urushihara H."/>
            <person name="Hernandez J."/>
            <person name="Rabbinowitsch E."/>
            <person name="Steffen D."/>
            <person name="Sanders M."/>
            <person name="Ma J."/>
            <person name="Kohara Y."/>
            <person name="Sharp S."/>
            <person name="Simmonds M.N."/>
            <person name="Spiegler S."/>
            <person name="Tivey A."/>
            <person name="Sugano S."/>
            <person name="White B."/>
            <person name="Walker D."/>
            <person name="Woodward J.R."/>
            <person name="Winckler T."/>
            <person name="Tanaka Y."/>
            <person name="Shaulsky G."/>
            <person name="Schleicher M."/>
            <person name="Weinstock G.M."/>
            <person name="Rosenthal A."/>
            <person name="Cox E.C."/>
            <person name="Chisholm R.L."/>
            <person name="Gibbs R.A."/>
            <person name="Loomis W.F."/>
            <person name="Platzer M."/>
            <person name="Kay R.R."/>
            <person name="Williams J.G."/>
            <person name="Dear P.H."/>
            <person name="Noegel A.A."/>
            <person name="Barrell B.G."/>
            <person name="Kuspa A."/>
        </authorList>
    </citation>
    <scope>NUCLEOTIDE SEQUENCE [LARGE SCALE GENOMIC DNA]</scope>
    <source>
        <strain>AX4</strain>
    </source>
</reference>
<dbReference type="EMBL" id="AAFI02000089">
    <property type="protein sequence ID" value="EAL64109.1"/>
    <property type="molecule type" value="Genomic_DNA"/>
</dbReference>
<dbReference type="RefSeq" id="XP_637634.1">
    <property type="nucleotide sequence ID" value="XM_632542.1"/>
</dbReference>
<dbReference type="SMR" id="Q54LC7"/>
<dbReference type="FunCoup" id="Q54LC7">
    <property type="interactions" value="37"/>
</dbReference>
<dbReference type="PaxDb" id="44689-DDB0234052"/>
<dbReference type="EnsemblProtists" id="EAL64109">
    <property type="protein sequence ID" value="EAL64109"/>
    <property type="gene ID" value="DDB_G0286707"/>
</dbReference>
<dbReference type="GeneID" id="8625775"/>
<dbReference type="KEGG" id="ddi:DDB_G0286707"/>
<dbReference type="dictyBase" id="DDB_G0286707"/>
<dbReference type="VEuPathDB" id="AmoebaDB:DDB_G0286707"/>
<dbReference type="eggNOG" id="KOG2377">
    <property type="taxonomic scope" value="Eukaryota"/>
</dbReference>
<dbReference type="HOGENOM" id="CLU_304106_0_0_1"/>
<dbReference type="InParanoid" id="Q54LC7"/>
<dbReference type="OMA" id="INSHDMY"/>
<dbReference type="PRO" id="PR:Q54LC7"/>
<dbReference type="Proteomes" id="UP000002195">
    <property type="component" value="Chromosome 4"/>
</dbReference>
<dbReference type="GO" id="GO:0031902">
    <property type="term" value="C:late endosome membrane"/>
    <property type="evidence" value="ECO:0000318"/>
    <property type="project" value="GO_Central"/>
</dbReference>
<dbReference type="GO" id="GO:0005765">
    <property type="term" value="C:lysosomal membrane"/>
    <property type="evidence" value="ECO:0007669"/>
    <property type="project" value="UniProtKB-SubCell"/>
</dbReference>
<dbReference type="GO" id="GO:0035658">
    <property type="term" value="C:Mon1-Ccz1 complex"/>
    <property type="evidence" value="ECO:0000318"/>
    <property type="project" value="GO_Central"/>
</dbReference>
<dbReference type="GO" id="GO:0006914">
    <property type="term" value="P:autophagy"/>
    <property type="evidence" value="ECO:0007669"/>
    <property type="project" value="UniProtKB-KW"/>
</dbReference>
<dbReference type="GO" id="GO:0010506">
    <property type="term" value="P:regulation of autophagy"/>
    <property type="evidence" value="ECO:0000318"/>
    <property type="project" value="GO_Central"/>
</dbReference>
<dbReference type="InterPro" id="IPR040371">
    <property type="entry name" value="RMC1"/>
</dbReference>
<dbReference type="InterPro" id="IPR009755">
    <property type="entry name" value="RMC1_C"/>
</dbReference>
<dbReference type="InterPro" id="IPR049040">
    <property type="entry name" value="RMC1_N"/>
</dbReference>
<dbReference type="InterPro" id="IPR036322">
    <property type="entry name" value="WD40_repeat_dom_sf"/>
</dbReference>
<dbReference type="PANTHER" id="PTHR12897">
    <property type="entry name" value="COLON CANCER-ASSOCIATED PROTEIN MIC1"/>
    <property type="match status" value="1"/>
</dbReference>
<dbReference type="PANTHER" id="PTHR12897:SF4">
    <property type="entry name" value="REGULATOR OF MON1-CCZ1 COMPLEX"/>
    <property type="match status" value="1"/>
</dbReference>
<dbReference type="Pfam" id="PF07035">
    <property type="entry name" value="RMC1_C"/>
    <property type="match status" value="1"/>
</dbReference>
<dbReference type="Pfam" id="PF21029">
    <property type="entry name" value="RMC1_N"/>
    <property type="match status" value="1"/>
</dbReference>
<dbReference type="SUPFAM" id="SSF50978">
    <property type="entry name" value="WD40 repeat-like"/>
    <property type="match status" value="1"/>
</dbReference>
<evidence type="ECO:0000250" key="1">
    <source>
        <dbReference type="UniProtKB" id="Q96DM3"/>
    </source>
</evidence>
<evidence type="ECO:0000256" key="2">
    <source>
        <dbReference type="SAM" id="MobiDB-lite"/>
    </source>
</evidence>
<evidence type="ECO:0000305" key="3"/>
<comment type="function">
    <text evidence="1">May have a role in autophagy.</text>
</comment>
<comment type="subcellular location">
    <subcellularLocation>
        <location evidence="1">Lysosome membrane</location>
    </subcellularLocation>
    <subcellularLocation>
        <location evidence="1">Late endosome membrane</location>
    </subcellularLocation>
</comment>
<comment type="similarity">
    <text evidence="3">Belongs to the RMC1 family.</text>
</comment>
<accession>Q54LC7</accession>
<sequence length="978" mass="110802">MSVEIVPLPLRINENESFLSYDDRLNRVVFKTSSGFGVVLLDDPEANRRYYSSDKPIIDAKFSPDLKYSAIQFSDYDIEILHLENGTRYIQTCKYKSSKATILGYYWTTKENILLVTNASLELYAMGLDGSCKLVKESKIKITNCVYSFNCNFGVLFLHSGGTSIQPYFFRTNSFDKLPKFNIEGNGNGFNIKNLYVTKLHEKFFCVYGDQEYIYLYEMTLETIYKIKPIKILLSGPNSIHFVDNLIIVHSELNISIVYDLKTIQRDRERGQTNKKEPEFPISAIPMTLSTINSNNLLYLMNNATKTHSTTSTPIINSINNNNNNNNNPSSSSSPSSSNNSQSSSPTMISSYEQRQIDQHKEQQLQKPNVTLYSKNWRFICPNYIFDPDSGIWYEVTLNFEKISNFLQFDSHKTIPFLQERTLLSAKFALLSIIKTIIEFKTDTLDGIGKIYDDLNKVLFRTTNRQLTESLHKSINQPNNNNNNNNNNNNNNNNNTAQTLNSTGNLSNSISIGGMNTSTDNLTTTTTTSSSISSSPSNSFIGNSKTNVNNLSYLNYKKQQQQQMEKQQHMPNDDEDSFSLIGDGGSGGSGGSFYNTNTNTTSTTNTTTSPSGKSNSNLKLSQSLNNTPNQSPNSRSSLNNSSNNINNNNNNNNNNNNNNNNNNHVVQNRQSRSNQYILINSHDMYDFVFNPIYEKLLIESQKEKEKENDNNNNNTNNNTNNNNNNNIEELNSNEKLELDSKYLIAVVIQYIKSLSFNHCTGISDKLYNLLISLLIDNNMFSRLHQFLQYYVITDSLSIAYKLLSIGEQYPPVLQLSLDMFKRLSMPNIIIETLLERGQVIQAIRLLRSTKETNEQAYQELLTPTYPIQFLASSSNQSNDTLFFSVFKFFETNNLIIPSHPSFDKYIKLFIEKFTEKSLSPLLLDILSNLNNNSTSGGDITPKKNVGGSFLNQSLNNSSPTLRSSNSLNSSPRLQYSNN</sequence>
<organism>
    <name type="scientific">Dictyostelium discoideum</name>
    <name type="common">Social amoeba</name>
    <dbReference type="NCBI Taxonomy" id="44689"/>
    <lineage>
        <taxon>Eukaryota</taxon>
        <taxon>Amoebozoa</taxon>
        <taxon>Evosea</taxon>
        <taxon>Eumycetozoa</taxon>
        <taxon>Dictyostelia</taxon>
        <taxon>Dictyosteliales</taxon>
        <taxon>Dictyosteliaceae</taxon>
        <taxon>Dictyostelium</taxon>
    </lineage>
</organism>
<gene>
    <name type="ORF">DDB_G0286707</name>
</gene>
<keyword id="KW-0072">Autophagy</keyword>
<keyword id="KW-0967">Endosome</keyword>
<keyword id="KW-0458">Lysosome</keyword>
<keyword id="KW-0472">Membrane</keyword>
<keyword id="KW-1185">Reference proteome</keyword>